<reference key="1">
    <citation type="journal article" date="1999" name="J. Bacteriol.">
        <title>Molecular characterization of KatY (antigen 5), a thermoregulated chromosomally encoded catalase-peroxidase of Yersinia pestis.</title>
        <authorList>
            <person name="Garcia E."/>
            <person name="Nedialkov Y.A."/>
            <person name="Elliott J."/>
            <person name="Motin V.L."/>
            <person name="Brubaker R.R."/>
        </authorList>
    </citation>
    <scope>NUCLEOTIDE SEQUENCE [GENOMIC DNA]</scope>
    <source>
        <strain>KIM</strain>
    </source>
</reference>
<reference key="2">
    <citation type="journal article" date="2001" name="Nature">
        <title>Genome sequence of Yersinia pestis, the causative agent of plague.</title>
        <authorList>
            <person name="Parkhill J."/>
            <person name="Wren B.W."/>
            <person name="Thomson N.R."/>
            <person name="Titball R.W."/>
            <person name="Holden M.T.G."/>
            <person name="Prentice M.B."/>
            <person name="Sebaihia M."/>
            <person name="James K.D."/>
            <person name="Churcher C.M."/>
            <person name="Mungall K.L."/>
            <person name="Baker S."/>
            <person name="Basham D."/>
            <person name="Bentley S.D."/>
            <person name="Brooks K."/>
            <person name="Cerdeno-Tarraga A.-M."/>
            <person name="Chillingworth T."/>
            <person name="Cronin A."/>
            <person name="Davies R.M."/>
            <person name="Davis P."/>
            <person name="Dougan G."/>
            <person name="Feltwell T."/>
            <person name="Hamlin N."/>
            <person name="Holroyd S."/>
            <person name="Jagels K."/>
            <person name="Karlyshev A.V."/>
            <person name="Leather S."/>
            <person name="Moule S."/>
            <person name="Oyston P.C.F."/>
            <person name="Quail M.A."/>
            <person name="Rutherford K.M."/>
            <person name="Simmonds M."/>
            <person name="Skelton J."/>
            <person name="Stevens K."/>
            <person name="Whitehead S."/>
            <person name="Barrell B.G."/>
        </authorList>
    </citation>
    <scope>NUCLEOTIDE SEQUENCE [LARGE SCALE GENOMIC DNA]</scope>
    <source>
        <strain>CO-92 / Biovar Orientalis</strain>
    </source>
</reference>
<reference key="3">
    <citation type="journal article" date="2002" name="J. Bacteriol.">
        <title>Genome sequence of Yersinia pestis KIM.</title>
        <authorList>
            <person name="Deng W."/>
            <person name="Burland V."/>
            <person name="Plunkett G. III"/>
            <person name="Boutin A."/>
            <person name="Mayhew G.F."/>
            <person name="Liss P."/>
            <person name="Perna N.T."/>
            <person name="Rose D.J."/>
            <person name="Mau B."/>
            <person name="Zhou S."/>
            <person name="Schwartz D.C."/>
            <person name="Fetherston J.D."/>
            <person name="Lindler L.E."/>
            <person name="Brubaker R.R."/>
            <person name="Plano G.V."/>
            <person name="Straley S.C."/>
            <person name="McDonough K.A."/>
            <person name="Nilles M.L."/>
            <person name="Matson J.S."/>
            <person name="Blattner F.R."/>
            <person name="Perry R.D."/>
        </authorList>
    </citation>
    <scope>NUCLEOTIDE SEQUENCE [LARGE SCALE GENOMIC DNA]</scope>
    <source>
        <strain>KIM10+ / Biovar Mediaevalis</strain>
    </source>
</reference>
<reference key="4">
    <citation type="journal article" date="2004" name="DNA Res.">
        <title>Complete genome sequence of Yersinia pestis strain 91001, an isolate avirulent to humans.</title>
        <authorList>
            <person name="Song Y."/>
            <person name="Tong Z."/>
            <person name="Wang J."/>
            <person name="Wang L."/>
            <person name="Guo Z."/>
            <person name="Han Y."/>
            <person name="Zhang J."/>
            <person name="Pei D."/>
            <person name="Zhou D."/>
            <person name="Qin H."/>
            <person name="Pang X."/>
            <person name="Han Y."/>
            <person name="Zhai J."/>
            <person name="Li M."/>
            <person name="Cui B."/>
            <person name="Qi Z."/>
            <person name="Jin L."/>
            <person name="Dai R."/>
            <person name="Chen F."/>
            <person name="Li S."/>
            <person name="Ye C."/>
            <person name="Du Z."/>
            <person name="Lin W."/>
            <person name="Wang J."/>
            <person name="Yu J."/>
            <person name="Yang H."/>
            <person name="Wang J."/>
            <person name="Huang P."/>
            <person name="Yang R."/>
        </authorList>
    </citation>
    <scope>NUCLEOTIDE SEQUENCE [LARGE SCALE GENOMIC DNA]</scope>
    <source>
        <strain>91001 / Biovar Mediaevalis</strain>
    </source>
</reference>
<feature type="signal peptide" evidence="2">
    <location>
        <begin position="1"/>
        <end position="21"/>
    </location>
</feature>
<feature type="chain" id="PRO_0000003643" description="Probable soluble cytochrome b562 1">
    <location>
        <begin position="22"/>
        <end position="127"/>
    </location>
</feature>
<feature type="binding site" description="axial binding residue" evidence="1">
    <location>
        <position position="28"/>
    </location>
    <ligand>
        <name>heme b</name>
        <dbReference type="ChEBI" id="CHEBI:60344"/>
    </ligand>
    <ligandPart>
        <name>Fe</name>
        <dbReference type="ChEBI" id="CHEBI:18248"/>
    </ligandPart>
</feature>
<feature type="binding site" description="axial binding residue" evidence="1">
    <location>
        <position position="123"/>
    </location>
    <ligand>
        <name>heme b</name>
        <dbReference type="ChEBI" id="CHEBI:60344"/>
    </ligand>
    <ligandPart>
        <name>Fe</name>
        <dbReference type="ChEBI" id="CHEBI:18248"/>
    </ligandPart>
</feature>
<accession>Q9X6B1</accession>
<accession>Q0WBX2</accession>
<protein>
    <recommendedName>
        <fullName>Probable soluble cytochrome b562 1</fullName>
        <shortName>Cytochrome b-562 1</shortName>
    </recommendedName>
</protein>
<sequence length="127" mass="14192">MRKIPIIAGVFSLLITSCTFAASLQDDMNILIANLGIVSSSTDTKVITSSLEKMRNAALDAQKAIPPKLEGKAEDSPEIKDYRHGFDLLIEQIDKTKQWAEEGNIQEVKKSVGEVINIRNTYHSRYR</sequence>
<evidence type="ECO:0000250" key="1"/>
<evidence type="ECO:0000255" key="2"/>
<evidence type="ECO:0000305" key="3"/>
<gene>
    <name type="primary">cybC1</name>
    <name type="synonym">cybC</name>
    <name type="ordered locus">YPO3320</name>
    <name type="ordered locus">y0869</name>
    <name type="ordered locus">YP_0366</name>
</gene>
<comment type="function">
    <text evidence="1">Electron-transport protein of unknown function.</text>
</comment>
<comment type="cofactor">
    <cofactor evidence="1">
        <name>heme b</name>
        <dbReference type="ChEBI" id="CHEBI:60344"/>
    </cofactor>
    <text evidence="1">Binds 1 heme b (iron(II)-protoporphyrin IX) group per molecule.</text>
</comment>
<comment type="subcellular location">
    <subcellularLocation>
        <location evidence="1">Periplasm</location>
    </subcellularLocation>
</comment>
<comment type="similarity">
    <text evidence="3">Belongs to the cytochrome b562 family.</text>
</comment>
<comment type="sequence caution" evidence="3">
    <conflict type="erroneous initiation">
        <sequence resource="EMBL-CDS" id="AAM84454"/>
    </conflict>
</comment>
<dbReference type="EMBL" id="AF135170">
    <property type="protein sequence ID" value="AAD37314.1"/>
    <property type="molecule type" value="Genomic_DNA"/>
</dbReference>
<dbReference type="EMBL" id="AL590842">
    <property type="protein sequence ID" value="CAL21911.1"/>
    <property type="molecule type" value="Genomic_DNA"/>
</dbReference>
<dbReference type="EMBL" id="AE009952">
    <property type="protein sequence ID" value="AAM84454.1"/>
    <property type="status" value="ALT_INIT"/>
    <property type="molecule type" value="Genomic_DNA"/>
</dbReference>
<dbReference type="EMBL" id="AE017042">
    <property type="protein sequence ID" value="AAS60639.1"/>
    <property type="molecule type" value="Genomic_DNA"/>
</dbReference>
<dbReference type="PIR" id="AD0403">
    <property type="entry name" value="AD0403"/>
</dbReference>
<dbReference type="RefSeq" id="WP_002215101.1">
    <property type="nucleotide sequence ID" value="NZ_WUCM01000060.1"/>
</dbReference>
<dbReference type="RefSeq" id="YP_002348216.1">
    <property type="nucleotide sequence ID" value="NC_003143.1"/>
</dbReference>
<dbReference type="SMR" id="Q9X6B1"/>
<dbReference type="STRING" id="214092.YPO3320"/>
<dbReference type="PaxDb" id="214092-YPO3320"/>
<dbReference type="DNASU" id="1145816"/>
<dbReference type="EnsemblBacteria" id="AAS60639">
    <property type="protein sequence ID" value="AAS60639"/>
    <property type="gene ID" value="YP_0366"/>
</dbReference>
<dbReference type="GeneID" id="57975389"/>
<dbReference type="KEGG" id="ype:YPO3320"/>
<dbReference type="KEGG" id="ypk:y0869"/>
<dbReference type="KEGG" id="ypm:YP_0366"/>
<dbReference type="PATRIC" id="fig|1028802.3.peg.266"/>
<dbReference type="eggNOG" id="COG3783">
    <property type="taxonomic scope" value="Bacteria"/>
</dbReference>
<dbReference type="HOGENOM" id="CLU_140814_1_1_6"/>
<dbReference type="OrthoDB" id="6539015at2"/>
<dbReference type="Proteomes" id="UP000000815">
    <property type="component" value="Chromosome"/>
</dbReference>
<dbReference type="Proteomes" id="UP000001019">
    <property type="component" value="Chromosome"/>
</dbReference>
<dbReference type="Proteomes" id="UP000002490">
    <property type="component" value="Chromosome"/>
</dbReference>
<dbReference type="GO" id="GO:0042597">
    <property type="term" value="C:periplasmic space"/>
    <property type="evidence" value="ECO:0007669"/>
    <property type="project" value="UniProtKB-SubCell"/>
</dbReference>
<dbReference type="GO" id="GO:0009055">
    <property type="term" value="F:electron transfer activity"/>
    <property type="evidence" value="ECO:0007669"/>
    <property type="project" value="InterPro"/>
</dbReference>
<dbReference type="GO" id="GO:0020037">
    <property type="term" value="F:heme binding"/>
    <property type="evidence" value="ECO:0007669"/>
    <property type="project" value="InterPro"/>
</dbReference>
<dbReference type="GO" id="GO:0005506">
    <property type="term" value="F:iron ion binding"/>
    <property type="evidence" value="ECO:0007669"/>
    <property type="project" value="InterPro"/>
</dbReference>
<dbReference type="GO" id="GO:0022900">
    <property type="term" value="P:electron transport chain"/>
    <property type="evidence" value="ECO:0007669"/>
    <property type="project" value="InterPro"/>
</dbReference>
<dbReference type="Gene3D" id="1.20.120.10">
    <property type="entry name" value="Cytochrome c/b562"/>
    <property type="match status" value="1"/>
</dbReference>
<dbReference type="InterPro" id="IPR009155">
    <property type="entry name" value="Cyt_b562"/>
</dbReference>
<dbReference type="InterPro" id="IPR010980">
    <property type="entry name" value="Cyt_c/b562"/>
</dbReference>
<dbReference type="NCBIfam" id="NF011632">
    <property type="entry name" value="PRK15058.1"/>
    <property type="match status" value="1"/>
</dbReference>
<dbReference type="Pfam" id="PF07361">
    <property type="entry name" value="Cytochrom_B562"/>
    <property type="match status" value="1"/>
</dbReference>
<dbReference type="PIRSF" id="PIRSF000029">
    <property type="entry name" value="Cytochrome_b562"/>
    <property type="match status" value="1"/>
</dbReference>
<dbReference type="SUPFAM" id="SSF47175">
    <property type="entry name" value="Cytochromes"/>
    <property type="match status" value="1"/>
</dbReference>
<keyword id="KW-0249">Electron transport</keyword>
<keyword id="KW-0349">Heme</keyword>
<keyword id="KW-0408">Iron</keyword>
<keyword id="KW-0479">Metal-binding</keyword>
<keyword id="KW-0574">Periplasm</keyword>
<keyword id="KW-1185">Reference proteome</keyword>
<keyword id="KW-0732">Signal</keyword>
<keyword id="KW-0813">Transport</keyword>
<name>C5621_YERPE</name>
<proteinExistence type="inferred from homology"/>
<organism>
    <name type="scientific">Yersinia pestis</name>
    <dbReference type="NCBI Taxonomy" id="632"/>
    <lineage>
        <taxon>Bacteria</taxon>
        <taxon>Pseudomonadati</taxon>
        <taxon>Pseudomonadota</taxon>
        <taxon>Gammaproteobacteria</taxon>
        <taxon>Enterobacterales</taxon>
        <taxon>Yersiniaceae</taxon>
        <taxon>Yersinia</taxon>
    </lineage>
</organism>